<accession>Q493U3</accession>
<name>RLME_BLOPB</name>
<organism>
    <name type="scientific">Blochmanniella pennsylvanica (strain BPEN)</name>
    <dbReference type="NCBI Taxonomy" id="291272"/>
    <lineage>
        <taxon>Bacteria</taxon>
        <taxon>Pseudomonadati</taxon>
        <taxon>Pseudomonadota</taxon>
        <taxon>Gammaproteobacteria</taxon>
        <taxon>Enterobacterales</taxon>
        <taxon>Enterobacteriaceae</taxon>
        <taxon>ant endosymbionts</taxon>
        <taxon>Candidatus Blochmanniella</taxon>
    </lineage>
</organism>
<dbReference type="EC" id="2.1.1.166" evidence="1"/>
<dbReference type="EMBL" id="CP000016">
    <property type="protein sequence ID" value="AAZ40742.1"/>
    <property type="molecule type" value="Genomic_DNA"/>
</dbReference>
<dbReference type="RefSeq" id="WP_011282649.1">
    <property type="nucleotide sequence ID" value="NC_007292.1"/>
</dbReference>
<dbReference type="SMR" id="Q493U3"/>
<dbReference type="STRING" id="291272.BPEN_100"/>
<dbReference type="KEGG" id="bpn:BPEN_100"/>
<dbReference type="eggNOG" id="COG0293">
    <property type="taxonomic scope" value="Bacteria"/>
</dbReference>
<dbReference type="HOGENOM" id="CLU_009422_4_0_6"/>
<dbReference type="OrthoDB" id="9790080at2"/>
<dbReference type="Proteomes" id="UP000007794">
    <property type="component" value="Chromosome"/>
</dbReference>
<dbReference type="GO" id="GO:0005737">
    <property type="term" value="C:cytoplasm"/>
    <property type="evidence" value="ECO:0007669"/>
    <property type="project" value="UniProtKB-SubCell"/>
</dbReference>
<dbReference type="GO" id="GO:0008650">
    <property type="term" value="F:rRNA (uridine-2'-O-)-methyltransferase activity"/>
    <property type="evidence" value="ECO:0007669"/>
    <property type="project" value="UniProtKB-UniRule"/>
</dbReference>
<dbReference type="FunFam" id="3.40.50.150:FF:000005">
    <property type="entry name" value="Ribosomal RNA large subunit methyltransferase E"/>
    <property type="match status" value="1"/>
</dbReference>
<dbReference type="Gene3D" id="3.40.50.150">
    <property type="entry name" value="Vaccinia Virus protein VP39"/>
    <property type="match status" value="1"/>
</dbReference>
<dbReference type="HAMAP" id="MF_01547">
    <property type="entry name" value="RNA_methyltr_E"/>
    <property type="match status" value="1"/>
</dbReference>
<dbReference type="InterPro" id="IPR050082">
    <property type="entry name" value="RNA_methyltr_RlmE"/>
</dbReference>
<dbReference type="InterPro" id="IPR002877">
    <property type="entry name" value="RNA_MeTrfase_FtsJ_dom"/>
</dbReference>
<dbReference type="InterPro" id="IPR015507">
    <property type="entry name" value="rRNA-MeTfrase_E"/>
</dbReference>
<dbReference type="InterPro" id="IPR029063">
    <property type="entry name" value="SAM-dependent_MTases_sf"/>
</dbReference>
<dbReference type="NCBIfam" id="NF008390">
    <property type="entry name" value="PRK11188.1"/>
    <property type="match status" value="1"/>
</dbReference>
<dbReference type="PANTHER" id="PTHR10920">
    <property type="entry name" value="RIBOSOMAL RNA METHYLTRANSFERASE"/>
    <property type="match status" value="1"/>
</dbReference>
<dbReference type="PANTHER" id="PTHR10920:SF18">
    <property type="entry name" value="RRNA METHYLTRANSFERASE 2, MITOCHONDRIAL"/>
    <property type="match status" value="1"/>
</dbReference>
<dbReference type="Pfam" id="PF01728">
    <property type="entry name" value="FtsJ"/>
    <property type="match status" value="1"/>
</dbReference>
<dbReference type="PIRSF" id="PIRSF005461">
    <property type="entry name" value="23S_rRNA_mtase"/>
    <property type="match status" value="1"/>
</dbReference>
<dbReference type="SUPFAM" id="SSF53335">
    <property type="entry name" value="S-adenosyl-L-methionine-dependent methyltransferases"/>
    <property type="match status" value="1"/>
</dbReference>
<reference key="1">
    <citation type="journal article" date="2005" name="Genome Res.">
        <title>Genome sequence of Blochmannia pennsylvanicus indicates parallel evolutionary trends among bacterial mutualists of insects.</title>
        <authorList>
            <person name="Degnan P.H."/>
            <person name="Lazarus A.B."/>
            <person name="Wernegreen J.J."/>
        </authorList>
    </citation>
    <scope>NUCLEOTIDE SEQUENCE [LARGE SCALE GENOMIC DNA]</scope>
    <source>
        <strain>BPEN</strain>
    </source>
</reference>
<protein>
    <recommendedName>
        <fullName evidence="1">Ribosomal RNA large subunit methyltransferase E</fullName>
        <ecNumber evidence="1">2.1.1.166</ecNumber>
    </recommendedName>
    <alternativeName>
        <fullName evidence="1">23S rRNA Um2552 methyltransferase</fullName>
    </alternativeName>
    <alternativeName>
        <fullName evidence="1">rRNA (uridine-2'-O-)-methyltransferase</fullName>
    </alternativeName>
</protein>
<evidence type="ECO:0000255" key="1">
    <source>
        <dbReference type="HAMAP-Rule" id="MF_01547"/>
    </source>
</evidence>
<sequence length="208" mass="23349">MVNSKYSMCSSGWLQKHFKDQYVKAAQRQKLRSRSWFKLDAINRIDALFSTGMTVIDLGSAPGGWALYVKSKIGKTGRIVACDILSMRNISGVNFLKGDCSNPNISKILYKWVGQKQVNVVLSDMAPNTTGISIIDVSRSIHLGNLALNICRNVLMHRGAFLVKVFQGKGLDKYLCDVHSLFNIVRIRKPDASRSHSREVYIVAKERK</sequence>
<comment type="function">
    <text evidence="1">Specifically methylates the uridine in position 2552 of 23S rRNA at the 2'-O position of the ribose in the fully assembled 50S ribosomal subunit.</text>
</comment>
<comment type="catalytic activity">
    <reaction evidence="1">
        <text>uridine(2552) in 23S rRNA + S-adenosyl-L-methionine = 2'-O-methyluridine(2552) in 23S rRNA + S-adenosyl-L-homocysteine + H(+)</text>
        <dbReference type="Rhea" id="RHEA:42720"/>
        <dbReference type="Rhea" id="RHEA-COMP:10202"/>
        <dbReference type="Rhea" id="RHEA-COMP:10203"/>
        <dbReference type="ChEBI" id="CHEBI:15378"/>
        <dbReference type="ChEBI" id="CHEBI:57856"/>
        <dbReference type="ChEBI" id="CHEBI:59789"/>
        <dbReference type="ChEBI" id="CHEBI:65315"/>
        <dbReference type="ChEBI" id="CHEBI:74478"/>
        <dbReference type="EC" id="2.1.1.166"/>
    </reaction>
</comment>
<comment type="subcellular location">
    <subcellularLocation>
        <location evidence="1">Cytoplasm</location>
    </subcellularLocation>
</comment>
<comment type="similarity">
    <text evidence="1">Belongs to the class I-like SAM-binding methyltransferase superfamily. RNA methyltransferase RlmE family.</text>
</comment>
<feature type="chain" id="PRO_0000155471" description="Ribosomal RNA large subunit methyltransferase E">
    <location>
        <begin position="1"/>
        <end position="208"/>
    </location>
</feature>
<feature type="active site" description="Proton acceptor" evidence="1">
    <location>
        <position position="164"/>
    </location>
</feature>
<feature type="binding site" evidence="1">
    <location>
        <position position="63"/>
    </location>
    <ligand>
        <name>S-adenosyl-L-methionine</name>
        <dbReference type="ChEBI" id="CHEBI:59789"/>
    </ligand>
</feature>
<feature type="binding site" evidence="1">
    <location>
        <position position="65"/>
    </location>
    <ligand>
        <name>S-adenosyl-L-methionine</name>
        <dbReference type="ChEBI" id="CHEBI:59789"/>
    </ligand>
</feature>
<feature type="binding site" evidence="1">
    <location>
        <position position="83"/>
    </location>
    <ligand>
        <name>S-adenosyl-L-methionine</name>
        <dbReference type="ChEBI" id="CHEBI:59789"/>
    </ligand>
</feature>
<feature type="binding site" evidence="1">
    <location>
        <position position="99"/>
    </location>
    <ligand>
        <name>S-adenosyl-L-methionine</name>
        <dbReference type="ChEBI" id="CHEBI:59789"/>
    </ligand>
</feature>
<feature type="binding site" evidence="1">
    <location>
        <position position="124"/>
    </location>
    <ligand>
        <name>S-adenosyl-L-methionine</name>
        <dbReference type="ChEBI" id="CHEBI:59789"/>
    </ligand>
</feature>
<proteinExistence type="inferred from homology"/>
<keyword id="KW-0963">Cytoplasm</keyword>
<keyword id="KW-0489">Methyltransferase</keyword>
<keyword id="KW-1185">Reference proteome</keyword>
<keyword id="KW-0698">rRNA processing</keyword>
<keyword id="KW-0949">S-adenosyl-L-methionine</keyword>
<keyword id="KW-0808">Transferase</keyword>
<gene>
    <name evidence="1" type="primary">rlmE</name>
    <name evidence="1" type="synonym">ftsJ</name>
    <name evidence="1" type="synonym">rrmJ</name>
    <name type="ordered locus">BPEN_100</name>
</gene>